<name>C3H14_ORYSJ</name>
<protein>
    <recommendedName>
        <fullName>Zinc finger CCCH domain-containing protein 14</fullName>
        <shortName>OsC3H14</shortName>
    </recommendedName>
</protein>
<evidence type="ECO:0000255" key="1">
    <source>
        <dbReference type="PROSITE-ProRule" id="PRU00117"/>
    </source>
</evidence>
<evidence type="ECO:0000255" key="2">
    <source>
        <dbReference type="PROSITE-ProRule" id="PRU00723"/>
    </source>
</evidence>
<evidence type="ECO:0000256" key="3">
    <source>
        <dbReference type="SAM" id="MobiDB-lite"/>
    </source>
</evidence>
<evidence type="ECO:0000305" key="4"/>
<keyword id="KW-0238">DNA-binding</keyword>
<keyword id="KW-0479">Metal-binding</keyword>
<keyword id="KW-1185">Reference proteome</keyword>
<keyword id="KW-0677">Repeat</keyword>
<keyword id="KW-0694">RNA-binding</keyword>
<keyword id="KW-0862">Zinc</keyword>
<keyword id="KW-0863">Zinc-finger</keyword>
<feature type="chain" id="PRO_0000346810" description="Zinc finger CCCH domain-containing protein 14">
    <location>
        <begin position="1"/>
        <end position="300"/>
    </location>
</feature>
<feature type="domain" description="KH" evidence="1">
    <location>
        <begin position="170"/>
        <end position="234"/>
    </location>
</feature>
<feature type="zinc finger region" description="C3H1-type 1" evidence="2">
    <location>
        <begin position="33"/>
        <end position="61"/>
    </location>
</feature>
<feature type="zinc finger region" description="C3H1-type 2" evidence="2">
    <location>
        <begin position="99"/>
        <end position="127"/>
    </location>
</feature>
<feature type="zinc finger region" description="C3H1-type 3" evidence="2">
    <location>
        <begin position="265"/>
        <end position="292"/>
    </location>
</feature>
<feature type="region of interest" description="Disordered" evidence="3">
    <location>
        <begin position="1"/>
        <end position="38"/>
    </location>
</feature>
<feature type="region of interest" description="Disordered" evidence="3">
    <location>
        <begin position="243"/>
        <end position="262"/>
    </location>
</feature>
<gene>
    <name type="ordered locus">Os02g0194200</name>
    <name type="ordered locus">LOC_Os02g10080</name>
    <name type="ORF">OsJ_005555</name>
    <name type="ORF">P0437H03.134</name>
</gene>
<accession>Q7F8R0</accession>
<accession>A0A0P0VFV8</accession>
<accession>B7F9G8</accession>
<organism>
    <name type="scientific">Oryza sativa subsp. japonica</name>
    <name type="common">Rice</name>
    <dbReference type="NCBI Taxonomy" id="39947"/>
    <lineage>
        <taxon>Eukaryota</taxon>
        <taxon>Viridiplantae</taxon>
        <taxon>Streptophyta</taxon>
        <taxon>Embryophyta</taxon>
        <taxon>Tracheophyta</taxon>
        <taxon>Spermatophyta</taxon>
        <taxon>Magnoliopsida</taxon>
        <taxon>Liliopsida</taxon>
        <taxon>Poales</taxon>
        <taxon>Poaceae</taxon>
        <taxon>BOP clade</taxon>
        <taxon>Oryzoideae</taxon>
        <taxon>Oryzeae</taxon>
        <taxon>Oryzinae</taxon>
        <taxon>Oryza</taxon>
        <taxon>Oryza sativa</taxon>
    </lineage>
</organism>
<sequence>MEVGGRKRGKPDGANGAGGKRARESESFQTGVGSKSKPCTKFFSTSGCPFGEGCHFLHHFPGGYQAVAKMTNLGGPAIAPPPGRMPMGNAVPDGPPTPTVKTRLCNKYNTAEGCKWGDKCHFAHGERELGKPMLMDSSMPPPMGPRPTGHFAPPPMPSPAMSTPASFGASATAKISVDASLAGGIIGRGGVNTKQISRVTGAKLAIRDHESDTNLKNIELEGTFDQIKNASAMVRELIVSIGGGAPPQGKKPVGGSHRGGGPGSNFKTKLCENFTKGSCTFGDRCHFAHGENELRKSAAA</sequence>
<proteinExistence type="evidence at transcript level"/>
<comment type="sequence caution" evidence="4">
    <conflict type="erroneous gene model prediction">
        <sequence resource="EMBL-CDS" id="BAF08090"/>
    </conflict>
</comment>
<reference key="1">
    <citation type="journal article" date="2005" name="Nature">
        <title>The map-based sequence of the rice genome.</title>
        <authorList>
            <consortium name="International rice genome sequencing project (IRGSP)"/>
        </authorList>
    </citation>
    <scope>NUCLEOTIDE SEQUENCE [LARGE SCALE GENOMIC DNA]</scope>
    <source>
        <strain>cv. Nipponbare</strain>
    </source>
</reference>
<reference key="2">
    <citation type="journal article" date="2008" name="Nucleic Acids Res.">
        <title>The rice annotation project database (RAP-DB): 2008 update.</title>
        <authorList>
            <consortium name="The rice annotation project (RAP)"/>
        </authorList>
    </citation>
    <scope>GENOME REANNOTATION</scope>
    <source>
        <strain>cv. Nipponbare</strain>
    </source>
</reference>
<reference key="3">
    <citation type="journal article" date="2013" name="Rice">
        <title>Improvement of the Oryza sativa Nipponbare reference genome using next generation sequence and optical map data.</title>
        <authorList>
            <person name="Kawahara Y."/>
            <person name="de la Bastide M."/>
            <person name="Hamilton J.P."/>
            <person name="Kanamori H."/>
            <person name="McCombie W.R."/>
            <person name="Ouyang S."/>
            <person name="Schwartz D.C."/>
            <person name="Tanaka T."/>
            <person name="Wu J."/>
            <person name="Zhou S."/>
            <person name="Childs K.L."/>
            <person name="Davidson R.M."/>
            <person name="Lin H."/>
            <person name="Quesada-Ocampo L."/>
            <person name="Vaillancourt B."/>
            <person name="Sakai H."/>
            <person name="Lee S.S."/>
            <person name="Kim J."/>
            <person name="Numa H."/>
            <person name="Itoh T."/>
            <person name="Buell C.R."/>
            <person name="Matsumoto T."/>
        </authorList>
    </citation>
    <scope>GENOME REANNOTATION</scope>
    <source>
        <strain>cv. Nipponbare</strain>
    </source>
</reference>
<reference key="4">
    <citation type="journal article" date="2005" name="PLoS Biol.">
        <title>The genomes of Oryza sativa: a history of duplications.</title>
        <authorList>
            <person name="Yu J."/>
            <person name="Wang J."/>
            <person name="Lin W."/>
            <person name="Li S."/>
            <person name="Li H."/>
            <person name="Zhou J."/>
            <person name="Ni P."/>
            <person name="Dong W."/>
            <person name="Hu S."/>
            <person name="Zeng C."/>
            <person name="Zhang J."/>
            <person name="Zhang Y."/>
            <person name="Li R."/>
            <person name="Xu Z."/>
            <person name="Li S."/>
            <person name="Li X."/>
            <person name="Zheng H."/>
            <person name="Cong L."/>
            <person name="Lin L."/>
            <person name="Yin J."/>
            <person name="Geng J."/>
            <person name="Li G."/>
            <person name="Shi J."/>
            <person name="Liu J."/>
            <person name="Lv H."/>
            <person name="Li J."/>
            <person name="Wang J."/>
            <person name="Deng Y."/>
            <person name="Ran L."/>
            <person name="Shi X."/>
            <person name="Wang X."/>
            <person name="Wu Q."/>
            <person name="Li C."/>
            <person name="Ren X."/>
            <person name="Wang J."/>
            <person name="Wang X."/>
            <person name="Li D."/>
            <person name="Liu D."/>
            <person name="Zhang X."/>
            <person name="Ji Z."/>
            <person name="Zhao W."/>
            <person name="Sun Y."/>
            <person name="Zhang Z."/>
            <person name="Bao J."/>
            <person name="Han Y."/>
            <person name="Dong L."/>
            <person name="Ji J."/>
            <person name="Chen P."/>
            <person name="Wu S."/>
            <person name="Liu J."/>
            <person name="Xiao Y."/>
            <person name="Bu D."/>
            <person name="Tan J."/>
            <person name="Yang L."/>
            <person name="Ye C."/>
            <person name="Zhang J."/>
            <person name="Xu J."/>
            <person name="Zhou Y."/>
            <person name="Yu Y."/>
            <person name="Zhang B."/>
            <person name="Zhuang S."/>
            <person name="Wei H."/>
            <person name="Liu B."/>
            <person name="Lei M."/>
            <person name="Yu H."/>
            <person name="Li Y."/>
            <person name="Xu H."/>
            <person name="Wei S."/>
            <person name="He X."/>
            <person name="Fang L."/>
            <person name="Zhang Z."/>
            <person name="Zhang Y."/>
            <person name="Huang X."/>
            <person name="Su Z."/>
            <person name="Tong W."/>
            <person name="Li J."/>
            <person name="Tong Z."/>
            <person name="Li S."/>
            <person name="Ye J."/>
            <person name="Wang L."/>
            <person name="Fang L."/>
            <person name="Lei T."/>
            <person name="Chen C.-S."/>
            <person name="Chen H.-C."/>
            <person name="Xu Z."/>
            <person name="Li H."/>
            <person name="Huang H."/>
            <person name="Zhang F."/>
            <person name="Xu H."/>
            <person name="Li N."/>
            <person name="Zhao C."/>
            <person name="Li S."/>
            <person name="Dong L."/>
            <person name="Huang Y."/>
            <person name="Li L."/>
            <person name="Xi Y."/>
            <person name="Qi Q."/>
            <person name="Li W."/>
            <person name="Zhang B."/>
            <person name="Hu W."/>
            <person name="Zhang Y."/>
            <person name="Tian X."/>
            <person name="Jiao Y."/>
            <person name="Liang X."/>
            <person name="Jin J."/>
            <person name="Gao L."/>
            <person name="Zheng W."/>
            <person name="Hao B."/>
            <person name="Liu S.-M."/>
            <person name="Wang W."/>
            <person name="Yuan L."/>
            <person name="Cao M."/>
            <person name="McDermott J."/>
            <person name="Samudrala R."/>
            <person name="Wang J."/>
            <person name="Wong G.K.-S."/>
            <person name="Yang H."/>
        </authorList>
    </citation>
    <scope>NUCLEOTIDE SEQUENCE [LARGE SCALE GENOMIC DNA]</scope>
    <source>
        <strain>cv. Nipponbare</strain>
    </source>
</reference>
<reference key="5">
    <citation type="submission" date="2006-10" db="EMBL/GenBank/DDBJ databases">
        <title>Oryza sativa full length cDNA.</title>
        <authorList>
            <consortium name="The rice full-length cDNA consortium"/>
        </authorList>
    </citation>
    <scope>NUCLEOTIDE SEQUENCE [LARGE SCALE MRNA]</scope>
    <source>
        <strain>cv. Nipponbare</strain>
    </source>
</reference>
<reference key="6">
    <citation type="journal article" date="2008" name="BMC Genomics">
        <title>Genome-wide analysis of CCCH zinc finger family in Arabidopsis and rice.</title>
        <authorList>
            <person name="Wang D."/>
            <person name="Guo Y."/>
            <person name="Wu C."/>
            <person name="Yang G."/>
            <person name="Li Y."/>
            <person name="Zheng C."/>
        </authorList>
    </citation>
    <scope>NOMENCLATURE</scope>
</reference>
<dbReference type="EMBL" id="AP000366">
    <property type="protein sequence ID" value="BAD15406.1"/>
    <property type="molecule type" value="Genomic_DNA"/>
</dbReference>
<dbReference type="EMBL" id="AP008208">
    <property type="protein sequence ID" value="BAF08090.2"/>
    <property type="status" value="ALT_SEQ"/>
    <property type="molecule type" value="Genomic_DNA"/>
</dbReference>
<dbReference type="EMBL" id="AP014958">
    <property type="protein sequence ID" value="BAS77436.1"/>
    <property type="molecule type" value="Genomic_DNA"/>
</dbReference>
<dbReference type="EMBL" id="CM000139">
    <property type="protein sequence ID" value="EAZ22072.1"/>
    <property type="molecule type" value="Genomic_DNA"/>
</dbReference>
<dbReference type="EMBL" id="AK242341">
    <property type="protein sequence ID" value="BAH01266.1"/>
    <property type="molecule type" value="mRNA"/>
</dbReference>
<dbReference type="RefSeq" id="XP_015626985.1">
    <property type="nucleotide sequence ID" value="XM_015771499.1"/>
</dbReference>
<dbReference type="SMR" id="Q7F8R0"/>
<dbReference type="FunCoup" id="Q7F8R0">
    <property type="interactions" value="1654"/>
</dbReference>
<dbReference type="STRING" id="39947.Q7F8R0"/>
<dbReference type="PaxDb" id="39947-Q7F8R0"/>
<dbReference type="EnsemblPlants" id="Os02t0194200-01">
    <property type="protein sequence ID" value="Os02t0194200-01"/>
    <property type="gene ID" value="Os02g0194200"/>
</dbReference>
<dbReference type="Gramene" id="Os02t0194200-01">
    <property type="protein sequence ID" value="Os02t0194200-01"/>
    <property type="gene ID" value="Os02g0194200"/>
</dbReference>
<dbReference type="KEGG" id="dosa:Os02g0194200"/>
<dbReference type="eggNOG" id="KOG1677">
    <property type="taxonomic scope" value="Eukaryota"/>
</dbReference>
<dbReference type="HOGENOM" id="CLU_045191_0_0_1"/>
<dbReference type="InParanoid" id="Q7F8R0"/>
<dbReference type="OMA" id="HEAGAFH"/>
<dbReference type="OrthoDB" id="410307at2759"/>
<dbReference type="Proteomes" id="UP000000763">
    <property type="component" value="Chromosome 2"/>
</dbReference>
<dbReference type="Proteomes" id="UP000007752">
    <property type="component" value="Chromosome 2"/>
</dbReference>
<dbReference type="Proteomes" id="UP000059680">
    <property type="component" value="Chromosome 2"/>
</dbReference>
<dbReference type="GO" id="GO:0005737">
    <property type="term" value="C:cytoplasm"/>
    <property type="evidence" value="ECO:0000318"/>
    <property type="project" value="GO_Central"/>
</dbReference>
<dbReference type="GO" id="GO:0003677">
    <property type="term" value="F:DNA binding"/>
    <property type="evidence" value="ECO:0007669"/>
    <property type="project" value="UniProtKB-KW"/>
</dbReference>
<dbReference type="GO" id="GO:0003729">
    <property type="term" value="F:mRNA binding"/>
    <property type="evidence" value="ECO:0000318"/>
    <property type="project" value="GO_Central"/>
</dbReference>
<dbReference type="GO" id="GO:0008270">
    <property type="term" value="F:zinc ion binding"/>
    <property type="evidence" value="ECO:0007669"/>
    <property type="project" value="UniProtKB-KW"/>
</dbReference>
<dbReference type="GO" id="GO:0010468">
    <property type="term" value="P:regulation of gene expression"/>
    <property type="evidence" value="ECO:0000318"/>
    <property type="project" value="GO_Central"/>
</dbReference>
<dbReference type="CDD" id="cd22464">
    <property type="entry name" value="KH-I_AtC3H36_like"/>
    <property type="match status" value="1"/>
</dbReference>
<dbReference type="FunFam" id="4.10.1000.10:FF:000003">
    <property type="entry name" value="Zinc finger CCCH domain-containing protein"/>
    <property type="match status" value="2"/>
</dbReference>
<dbReference type="FunFam" id="3.30.1370.10:FF:000069">
    <property type="entry name" value="Zinc finger CCCH domain-containing protein 52"/>
    <property type="match status" value="1"/>
</dbReference>
<dbReference type="Gene3D" id="3.30.1370.10">
    <property type="entry name" value="K Homology domain, type 1"/>
    <property type="match status" value="1"/>
</dbReference>
<dbReference type="Gene3D" id="4.10.1000.10">
    <property type="entry name" value="Zinc finger, CCCH-type"/>
    <property type="match status" value="2"/>
</dbReference>
<dbReference type="InterPro" id="IPR004087">
    <property type="entry name" value="KH_dom"/>
</dbReference>
<dbReference type="InterPro" id="IPR004088">
    <property type="entry name" value="KH_dom_type_1"/>
</dbReference>
<dbReference type="InterPro" id="IPR036612">
    <property type="entry name" value="KH_dom_type_1_sf"/>
</dbReference>
<dbReference type="InterPro" id="IPR045877">
    <property type="entry name" value="ZFP36-like"/>
</dbReference>
<dbReference type="InterPro" id="IPR000571">
    <property type="entry name" value="Znf_CCCH"/>
</dbReference>
<dbReference type="InterPro" id="IPR036855">
    <property type="entry name" value="Znf_CCCH_sf"/>
</dbReference>
<dbReference type="PANTHER" id="PTHR12547">
    <property type="entry name" value="CCCH ZINC FINGER/TIS11-RELATED"/>
    <property type="match status" value="1"/>
</dbReference>
<dbReference type="PANTHER" id="PTHR12547:SF154">
    <property type="entry name" value="ZINC FINGER CCCH DOMAIN-CONTAINING PROTEIN 52"/>
    <property type="match status" value="1"/>
</dbReference>
<dbReference type="Pfam" id="PF00013">
    <property type="entry name" value="KH_1"/>
    <property type="match status" value="1"/>
</dbReference>
<dbReference type="Pfam" id="PF00642">
    <property type="entry name" value="zf-CCCH"/>
    <property type="match status" value="2"/>
</dbReference>
<dbReference type="SMART" id="SM00322">
    <property type="entry name" value="KH"/>
    <property type="match status" value="1"/>
</dbReference>
<dbReference type="SMART" id="SM00356">
    <property type="entry name" value="ZnF_C3H1"/>
    <property type="match status" value="3"/>
</dbReference>
<dbReference type="SUPFAM" id="SSF90229">
    <property type="entry name" value="CCCH zinc finger"/>
    <property type="match status" value="3"/>
</dbReference>
<dbReference type="SUPFAM" id="SSF54791">
    <property type="entry name" value="Eukaryotic type KH-domain (KH-domain type I)"/>
    <property type="match status" value="1"/>
</dbReference>
<dbReference type="PROSITE" id="PS50084">
    <property type="entry name" value="KH_TYPE_1"/>
    <property type="match status" value="1"/>
</dbReference>
<dbReference type="PROSITE" id="PS50103">
    <property type="entry name" value="ZF_C3H1"/>
    <property type="match status" value="3"/>
</dbReference>